<feature type="chain" id="PRO_0000151194" description="Undecaprenyl-diphosphatase 1">
    <location>
        <begin position="1"/>
        <end position="266"/>
    </location>
</feature>
<feature type="transmembrane region" description="Helical" evidence="1">
    <location>
        <begin position="1"/>
        <end position="21"/>
    </location>
</feature>
<feature type="transmembrane region" description="Helical" evidence="1">
    <location>
        <begin position="39"/>
        <end position="59"/>
    </location>
</feature>
<feature type="transmembrane region" description="Helical" evidence="1">
    <location>
        <begin position="87"/>
        <end position="107"/>
    </location>
</feature>
<feature type="transmembrane region" description="Helical" evidence="1">
    <location>
        <begin position="114"/>
        <end position="134"/>
    </location>
</feature>
<feature type="transmembrane region" description="Helical" evidence="1">
    <location>
        <begin position="149"/>
        <end position="169"/>
    </location>
</feature>
<feature type="transmembrane region" description="Helical" evidence="1">
    <location>
        <begin position="183"/>
        <end position="203"/>
    </location>
</feature>
<feature type="transmembrane region" description="Helical" evidence="1">
    <location>
        <begin position="218"/>
        <end position="238"/>
    </location>
</feature>
<feature type="transmembrane region" description="Helical" evidence="1">
    <location>
        <begin position="246"/>
        <end position="266"/>
    </location>
</feature>
<keyword id="KW-0046">Antibiotic resistance</keyword>
<keyword id="KW-0997">Cell inner membrane</keyword>
<keyword id="KW-1003">Cell membrane</keyword>
<keyword id="KW-0133">Cell shape</keyword>
<keyword id="KW-0961">Cell wall biogenesis/degradation</keyword>
<keyword id="KW-0378">Hydrolase</keyword>
<keyword id="KW-0472">Membrane</keyword>
<keyword id="KW-0573">Peptidoglycan synthesis</keyword>
<keyword id="KW-1185">Reference proteome</keyword>
<keyword id="KW-0812">Transmembrane</keyword>
<keyword id="KW-1133">Transmembrane helix</keyword>
<accession>Q8EHD3</accession>
<reference key="1">
    <citation type="journal article" date="2002" name="Nat. Biotechnol.">
        <title>Genome sequence of the dissimilatory metal ion-reducing bacterium Shewanella oneidensis.</title>
        <authorList>
            <person name="Heidelberg J.F."/>
            <person name="Paulsen I.T."/>
            <person name="Nelson K.E."/>
            <person name="Gaidos E.J."/>
            <person name="Nelson W.C."/>
            <person name="Read T.D."/>
            <person name="Eisen J.A."/>
            <person name="Seshadri R."/>
            <person name="Ward N.L."/>
            <person name="Methe B.A."/>
            <person name="Clayton R.A."/>
            <person name="Meyer T."/>
            <person name="Tsapin A."/>
            <person name="Scott J."/>
            <person name="Beanan M.J."/>
            <person name="Brinkac L.M."/>
            <person name="Daugherty S.C."/>
            <person name="DeBoy R.T."/>
            <person name="Dodson R.J."/>
            <person name="Durkin A.S."/>
            <person name="Haft D.H."/>
            <person name="Kolonay J.F."/>
            <person name="Madupu R."/>
            <person name="Peterson J.D."/>
            <person name="Umayam L.A."/>
            <person name="White O."/>
            <person name="Wolf A.M."/>
            <person name="Vamathevan J.J."/>
            <person name="Weidman J.F."/>
            <person name="Impraim M."/>
            <person name="Lee K."/>
            <person name="Berry K.J."/>
            <person name="Lee C."/>
            <person name="Mueller J."/>
            <person name="Khouri H.M."/>
            <person name="Gill J."/>
            <person name="Utterback T.R."/>
            <person name="McDonald L.A."/>
            <person name="Feldblyum T.V."/>
            <person name="Smith H.O."/>
            <person name="Venter J.C."/>
            <person name="Nealson K.H."/>
            <person name="Fraser C.M."/>
        </authorList>
    </citation>
    <scope>NUCLEOTIDE SEQUENCE [LARGE SCALE GENOMIC DNA]</scope>
    <source>
        <strain>ATCC 700550 / JCM 31522 / CIP 106686 / LMG 19005 / NCIMB 14063 / MR-1</strain>
    </source>
</reference>
<organism>
    <name type="scientific">Shewanella oneidensis (strain ATCC 700550 / JCM 31522 / CIP 106686 / LMG 19005 / NCIMB 14063 / MR-1)</name>
    <dbReference type="NCBI Taxonomy" id="211586"/>
    <lineage>
        <taxon>Bacteria</taxon>
        <taxon>Pseudomonadati</taxon>
        <taxon>Pseudomonadota</taxon>
        <taxon>Gammaproteobacteria</taxon>
        <taxon>Alteromonadales</taxon>
        <taxon>Shewanellaceae</taxon>
        <taxon>Shewanella</taxon>
    </lineage>
</organism>
<comment type="function">
    <text evidence="1">Catalyzes the dephosphorylation of undecaprenyl diphosphate (UPP). Confers resistance to bacitracin.</text>
</comment>
<comment type="catalytic activity">
    <reaction evidence="1">
        <text>di-trans,octa-cis-undecaprenyl diphosphate + H2O = di-trans,octa-cis-undecaprenyl phosphate + phosphate + H(+)</text>
        <dbReference type="Rhea" id="RHEA:28094"/>
        <dbReference type="ChEBI" id="CHEBI:15377"/>
        <dbReference type="ChEBI" id="CHEBI:15378"/>
        <dbReference type="ChEBI" id="CHEBI:43474"/>
        <dbReference type="ChEBI" id="CHEBI:58405"/>
        <dbReference type="ChEBI" id="CHEBI:60392"/>
        <dbReference type="EC" id="3.6.1.27"/>
    </reaction>
</comment>
<comment type="subcellular location">
    <subcellularLocation>
        <location evidence="1">Cell inner membrane</location>
        <topology evidence="1">Multi-pass membrane protein</topology>
    </subcellularLocation>
</comment>
<comment type="miscellaneous">
    <text>Bacitracin is thought to be involved in the inhibition of peptidoglycan synthesis by sequestering undecaprenyl diphosphate, thereby reducing the pool of lipid carrier available.</text>
</comment>
<comment type="similarity">
    <text evidence="1">Belongs to the UppP family.</text>
</comment>
<name>UPPP1_SHEON</name>
<proteinExistence type="inferred from homology"/>
<sequence length="266" mass="29124">MDTFQVIILALIQGLTEFLPISSSAHLILPAQLLGWEDQGLSFDVAVNTGSLFAVVIYFRHELWAMFKAWIASIVKGQHSDDSKLAWWIILATLPAVFFGFMAKDFIATHLRNTGVIAVTTVVFGLLLWWADKMSRHDLTIYQTGWRKALLIGFAQALALIPGTSRSGATMTAALMLGLSRDAAARFSFLMSVPVSLGAAILVGKDLAESPLPIDYQALTLGTVISFAAAYLCIHYFLKIISRMGMTPFVIYRLALGAVLCGFIFL</sequence>
<evidence type="ECO:0000255" key="1">
    <source>
        <dbReference type="HAMAP-Rule" id="MF_01006"/>
    </source>
</evidence>
<protein>
    <recommendedName>
        <fullName evidence="1">Undecaprenyl-diphosphatase 1</fullName>
        <ecNumber evidence="1">3.6.1.27</ecNumber>
    </recommendedName>
    <alternativeName>
        <fullName evidence="1">Bacitracin resistance protein 1</fullName>
    </alternativeName>
    <alternativeName>
        <fullName evidence="1">Undecaprenyl pyrophosphate phosphatase 1</fullName>
    </alternativeName>
</protein>
<dbReference type="EC" id="3.6.1.27" evidence="1"/>
<dbReference type="EMBL" id="AE014299">
    <property type="protein sequence ID" value="AAN54360.1"/>
    <property type="molecule type" value="Genomic_DNA"/>
</dbReference>
<dbReference type="RefSeq" id="NP_716915.1">
    <property type="nucleotide sequence ID" value="NC_004347.2"/>
</dbReference>
<dbReference type="RefSeq" id="WP_011071506.1">
    <property type="nucleotide sequence ID" value="NC_004347.2"/>
</dbReference>
<dbReference type="SMR" id="Q8EHD3"/>
<dbReference type="STRING" id="211586.SO_1293"/>
<dbReference type="PaxDb" id="211586-SO_1293"/>
<dbReference type="KEGG" id="son:SO_1293"/>
<dbReference type="PATRIC" id="fig|211586.12.peg.1239"/>
<dbReference type="eggNOG" id="COG1968">
    <property type="taxonomic scope" value="Bacteria"/>
</dbReference>
<dbReference type="HOGENOM" id="CLU_060296_1_0_6"/>
<dbReference type="OrthoDB" id="9808289at2"/>
<dbReference type="PhylomeDB" id="Q8EHD3"/>
<dbReference type="BioCyc" id="SONE211586:G1GMP-1194-MONOMER"/>
<dbReference type="Proteomes" id="UP000008186">
    <property type="component" value="Chromosome"/>
</dbReference>
<dbReference type="GO" id="GO:0005886">
    <property type="term" value="C:plasma membrane"/>
    <property type="evidence" value="ECO:0000318"/>
    <property type="project" value="GO_Central"/>
</dbReference>
<dbReference type="GO" id="GO:0050380">
    <property type="term" value="F:undecaprenyl-diphosphatase activity"/>
    <property type="evidence" value="ECO:0000318"/>
    <property type="project" value="GO_Central"/>
</dbReference>
<dbReference type="GO" id="GO:0071555">
    <property type="term" value="P:cell wall organization"/>
    <property type="evidence" value="ECO:0007669"/>
    <property type="project" value="UniProtKB-KW"/>
</dbReference>
<dbReference type="GO" id="GO:0009252">
    <property type="term" value="P:peptidoglycan biosynthetic process"/>
    <property type="evidence" value="ECO:0007669"/>
    <property type="project" value="UniProtKB-KW"/>
</dbReference>
<dbReference type="GO" id="GO:0000270">
    <property type="term" value="P:peptidoglycan metabolic process"/>
    <property type="evidence" value="ECO:0000318"/>
    <property type="project" value="GO_Central"/>
</dbReference>
<dbReference type="GO" id="GO:0008360">
    <property type="term" value="P:regulation of cell shape"/>
    <property type="evidence" value="ECO:0007669"/>
    <property type="project" value="UniProtKB-KW"/>
</dbReference>
<dbReference type="GO" id="GO:0046677">
    <property type="term" value="P:response to antibiotic"/>
    <property type="evidence" value="ECO:0007669"/>
    <property type="project" value="UniProtKB-UniRule"/>
</dbReference>
<dbReference type="HAMAP" id="MF_01006">
    <property type="entry name" value="Undec_diphosphatase"/>
    <property type="match status" value="1"/>
</dbReference>
<dbReference type="InterPro" id="IPR003824">
    <property type="entry name" value="UppP"/>
</dbReference>
<dbReference type="NCBIfam" id="NF001393">
    <property type="entry name" value="PRK00281.2-4"/>
    <property type="match status" value="1"/>
</dbReference>
<dbReference type="NCBIfam" id="TIGR00753">
    <property type="entry name" value="undec_PP_bacA"/>
    <property type="match status" value="1"/>
</dbReference>
<dbReference type="PANTHER" id="PTHR30622">
    <property type="entry name" value="UNDECAPRENYL-DIPHOSPHATASE"/>
    <property type="match status" value="1"/>
</dbReference>
<dbReference type="PANTHER" id="PTHR30622:SF4">
    <property type="entry name" value="UNDECAPRENYL-DIPHOSPHATASE"/>
    <property type="match status" value="1"/>
</dbReference>
<dbReference type="Pfam" id="PF02673">
    <property type="entry name" value="BacA"/>
    <property type="match status" value="1"/>
</dbReference>
<gene>
    <name evidence="1" type="primary">uppP1</name>
    <name type="synonym">bacA1</name>
    <name type="synonym">upk1</name>
    <name type="ordered locus">SO_1293</name>
</gene>